<accession>Q6CA67</accession>
<sequence length="508" mass="58620">MKFNFWKGLWKPKSLTPTLSHRLYRRMYTPQPPLNREMTVLDRSKFTVSLNLALAKFPDPKYIAQFAKECKADILQLRSINHVQKTDDNGRAVLLRHDLDLEGGEDVASKVMSQLSPRGKELLTEAQADITKIVKDLDYDFWRADEIFYSVLPVTEKDEIPSGFSMVGHVAHLNLRSEWKDYDRLIGQVILDKNPRVKTVVNKVDSIDTKFRTFKMDVLAGEDNTEVEQHESGCRFQFDFAKVYWNSRLHTEHDRLVSLFRGEASSRERKQQERAKRENHEKSTETAVEPDNTPATAVCDVFAGVGPFAVPSGRTSLFVMANDLNPYSYEALEHNVKLNKVSEYVKCFNLDGAEYVQQSMKLLDEHRRTQPTINPVQVRKRKAGQPVVKQDIPNHYSHYVMNLPDSAIEFLWSFKGLYTTVDGLSQDTPLPHVHVHCFHKWEAGEEEPSKEETKAALLERVYKQIDVRLDPNEVGMHWVRKVSPKKDMFCISFELPKEVAWAPQVNKE</sequence>
<organism>
    <name type="scientific">Yarrowia lipolytica (strain CLIB 122 / E 150)</name>
    <name type="common">Yeast</name>
    <name type="synonym">Candida lipolytica</name>
    <dbReference type="NCBI Taxonomy" id="284591"/>
    <lineage>
        <taxon>Eukaryota</taxon>
        <taxon>Fungi</taxon>
        <taxon>Dikarya</taxon>
        <taxon>Ascomycota</taxon>
        <taxon>Saccharomycotina</taxon>
        <taxon>Dipodascomycetes</taxon>
        <taxon>Dipodascales</taxon>
        <taxon>Dipodascales incertae sedis</taxon>
        <taxon>Yarrowia</taxon>
    </lineage>
</organism>
<reference key="1">
    <citation type="journal article" date="2004" name="Nature">
        <title>Genome evolution in yeasts.</title>
        <authorList>
            <person name="Dujon B."/>
            <person name="Sherman D."/>
            <person name="Fischer G."/>
            <person name="Durrens P."/>
            <person name="Casaregola S."/>
            <person name="Lafontaine I."/>
            <person name="de Montigny J."/>
            <person name="Marck C."/>
            <person name="Neuveglise C."/>
            <person name="Talla E."/>
            <person name="Goffard N."/>
            <person name="Frangeul L."/>
            <person name="Aigle M."/>
            <person name="Anthouard V."/>
            <person name="Babour A."/>
            <person name="Barbe V."/>
            <person name="Barnay S."/>
            <person name="Blanchin S."/>
            <person name="Beckerich J.-M."/>
            <person name="Beyne E."/>
            <person name="Bleykasten C."/>
            <person name="Boisrame A."/>
            <person name="Boyer J."/>
            <person name="Cattolico L."/>
            <person name="Confanioleri F."/>
            <person name="de Daruvar A."/>
            <person name="Despons L."/>
            <person name="Fabre E."/>
            <person name="Fairhead C."/>
            <person name="Ferry-Dumazet H."/>
            <person name="Groppi A."/>
            <person name="Hantraye F."/>
            <person name="Hennequin C."/>
            <person name="Jauniaux N."/>
            <person name="Joyet P."/>
            <person name="Kachouri R."/>
            <person name="Kerrest A."/>
            <person name="Koszul R."/>
            <person name="Lemaire M."/>
            <person name="Lesur I."/>
            <person name="Ma L."/>
            <person name="Muller H."/>
            <person name="Nicaud J.-M."/>
            <person name="Nikolski M."/>
            <person name="Oztas S."/>
            <person name="Ozier-Kalogeropoulos O."/>
            <person name="Pellenz S."/>
            <person name="Potier S."/>
            <person name="Richard G.-F."/>
            <person name="Straub M.-L."/>
            <person name="Suleau A."/>
            <person name="Swennen D."/>
            <person name="Tekaia F."/>
            <person name="Wesolowski-Louvel M."/>
            <person name="Westhof E."/>
            <person name="Wirth B."/>
            <person name="Zeniou-Meyer M."/>
            <person name="Zivanovic Y."/>
            <person name="Bolotin-Fukuhara M."/>
            <person name="Thierry A."/>
            <person name="Bouchier C."/>
            <person name="Caudron B."/>
            <person name="Scarpelli C."/>
            <person name="Gaillardin C."/>
            <person name="Weissenbach J."/>
            <person name="Wincker P."/>
            <person name="Souciet J.-L."/>
        </authorList>
    </citation>
    <scope>NUCLEOTIDE SEQUENCE [LARGE SCALE GENOMIC DNA]</scope>
    <source>
        <strain>CLIB 122 / E 150</strain>
    </source>
</reference>
<dbReference type="EC" id="2.1.1.228" evidence="1"/>
<dbReference type="EMBL" id="CR382130">
    <property type="protein sequence ID" value="CAG80633.1"/>
    <property type="molecule type" value="Genomic_DNA"/>
</dbReference>
<dbReference type="RefSeq" id="XP_502445.1">
    <property type="nucleotide sequence ID" value="XM_502445.1"/>
</dbReference>
<dbReference type="FunCoup" id="Q6CA67">
    <property type="interactions" value="1130"/>
</dbReference>
<dbReference type="STRING" id="284591.Q6CA67"/>
<dbReference type="EnsemblFungi" id="CAG80633">
    <property type="protein sequence ID" value="CAG80633"/>
    <property type="gene ID" value="YALI0_D05489g"/>
</dbReference>
<dbReference type="KEGG" id="yli:2911026"/>
<dbReference type="VEuPathDB" id="FungiDB:YALI0_D05489g"/>
<dbReference type="HOGENOM" id="CLU_022610_2_3_1"/>
<dbReference type="InParanoid" id="Q6CA67"/>
<dbReference type="OMA" id="VGSHSQF"/>
<dbReference type="OrthoDB" id="59818at4891"/>
<dbReference type="Proteomes" id="UP000001300">
    <property type="component" value="Chromosome D"/>
</dbReference>
<dbReference type="GO" id="GO:0005737">
    <property type="term" value="C:cytoplasm"/>
    <property type="evidence" value="ECO:0000318"/>
    <property type="project" value="GO_Central"/>
</dbReference>
<dbReference type="GO" id="GO:0005759">
    <property type="term" value="C:mitochondrial matrix"/>
    <property type="evidence" value="ECO:0000318"/>
    <property type="project" value="GO_Central"/>
</dbReference>
<dbReference type="GO" id="GO:0005634">
    <property type="term" value="C:nucleus"/>
    <property type="evidence" value="ECO:0007669"/>
    <property type="project" value="UniProtKB-SubCell"/>
</dbReference>
<dbReference type="GO" id="GO:0052906">
    <property type="term" value="F:tRNA (guanine(37)-N1)-methyltransferase activity"/>
    <property type="evidence" value="ECO:0007669"/>
    <property type="project" value="UniProtKB-UniRule"/>
</dbReference>
<dbReference type="GO" id="GO:0008175">
    <property type="term" value="F:tRNA methyltransferase activity"/>
    <property type="evidence" value="ECO:0000318"/>
    <property type="project" value="GO_Central"/>
</dbReference>
<dbReference type="GO" id="GO:0070901">
    <property type="term" value="P:mitochondrial tRNA methylation"/>
    <property type="evidence" value="ECO:0000318"/>
    <property type="project" value="GO_Central"/>
</dbReference>
<dbReference type="GO" id="GO:0002939">
    <property type="term" value="P:tRNA N1-guanine methylation"/>
    <property type="evidence" value="ECO:0000318"/>
    <property type="project" value="GO_Central"/>
</dbReference>
<dbReference type="FunFam" id="3.30.300.110:FF:000001">
    <property type="entry name" value="tRNA (guanine(37)-N1)-methyltransferase"/>
    <property type="match status" value="1"/>
</dbReference>
<dbReference type="Gene3D" id="3.30.300.110">
    <property type="entry name" value="Met-10+ protein-like domains"/>
    <property type="match status" value="1"/>
</dbReference>
<dbReference type="Gene3D" id="3.40.50.150">
    <property type="entry name" value="Vaccinia Virus protein VP39"/>
    <property type="match status" value="1"/>
</dbReference>
<dbReference type="HAMAP" id="MF_03152">
    <property type="entry name" value="TRM5"/>
    <property type="match status" value="1"/>
</dbReference>
<dbReference type="InterPro" id="IPR030382">
    <property type="entry name" value="MeTrfase_TRM5/TYW2"/>
</dbReference>
<dbReference type="InterPro" id="IPR029063">
    <property type="entry name" value="SAM-dependent_MTases_sf"/>
</dbReference>
<dbReference type="InterPro" id="IPR056743">
    <property type="entry name" value="TRM5-TYW2-like_MTfase"/>
</dbReference>
<dbReference type="InterPro" id="IPR056744">
    <property type="entry name" value="TRM5/TYW2-like_N"/>
</dbReference>
<dbReference type="InterPro" id="IPR025792">
    <property type="entry name" value="tRNA_Gua_MeTrfase_euk"/>
</dbReference>
<dbReference type="PANTHER" id="PTHR23245:SF36">
    <property type="entry name" value="TRNA (GUANINE(37)-N1)-METHYLTRANSFERASE"/>
    <property type="match status" value="1"/>
</dbReference>
<dbReference type="PANTHER" id="PTHR23245">
    <property type="entry name" value="TRNA METHYLTRANSFERASE"/>
    <property type="match status" value="1"/>
</dbReference>
<dbReference type="Pfam" id="PF02475">
    <property type="entry name" value="TRM5-TYW2_MTfase"/>
    <property type="match status" value="2"/>
</dbReference>
<dbReference type="Pfam" id="PF25133">
    <property type="entry name" value="TYW2_N_2"/>
    <property type="match status" value="1"/>
</dbReference>
<dbReference type="SUPFAM" id="SSF53335">
    <property type="entry name" value="S-adenosyl-L-methionine-dependent methyltransferases"/>
    <property type="match status" value="1"/>
</dbReference>
<dbReference type="PROSITE" id="PS51684">
    <property type="entry name" value="SAM_MT_TRM5_TYW2"/>
    <property type="match status" value="1"/>
</dbReference>
<name>TRM5_YARLI</name>
<protein>
    <recommendedName>
        <fullName evidence="1">tRNA (guanine(37)-N(1))-methyltransferase</fullName>
        <ecNumber evidence="1">2.1.1.228</ecNumber>
    </recommendedName>
    <alternativeName>
        <fullName evidence="1">M1G-methyltransferase</fullName>
    </alternativeName>
    <alternativeName>
        <fullName evidence="1">tRNA [GM37] methyltransferase</fullName>
    </alternativeName>
    <alternativeName>
        <fullName evidence="1">tRNA methyltransferase 5</fullName>
    </alternativeName>
</protein>
<keyword id="KW-0963">Cytoplasm</keyword>
<keyword id="KW-0489">Methyltransferase</keyword>
<keyword id="KW-0496">Mitochondrion</keyword>
<keyword id="KW-0539">Nucleus</keyword>
<keyword id="KW-1185">Reference proteome</keyword>
<keyword id="KW-0949">S-adenosyl-L-methionine</keyword>
<keyword id="KW-0808">Transferase</keyword>
<keyword id="KW-0809">Transit peptide</keyword>
<keyword id="KW-0819">tRNA processing</keyword>
<proteinExistence type="inferred from homology"/>
<evidence type="ECO:0000255" key="1">
    <source>
        <dbReference type="HAMAP-Rule" id="MF_03152"/>
    </source>
</evidence>
<evidence type="ECO:0000256" key="2">
    <source>
        <dbReference type="SAM" id="MobiDB-lite"/>
    </source>
</evidence>
<evidence type="ECO:0000305" key="3"/>
<gene>
    <name evidence="1" type="primary">TRM5</name>
    <name type="ordered locus">YALI0D05489g</name>
</gene>
<comment type="function">
    <text evidence="1">Specifically methylates the N1 position of guanosine-37 in various cytoplasmic and mitochondrial tRNAs. Methylation is not dependent on the nature of the nucleoside 5' of the target nucleoside. This is the first step in the biosynthesis of wybutosine (yW), a modified base adjacent to the anticodon of tRNAs and required for accurate decoding.</text>
</comment>
<comment type="catalytic activity">
    <reaction evidence="1">
        <text>guanosine(37) in tRNA + S-adenosyl-L-methionine = N(1)-methylguanosine(37) in tRNA + S-adenosyl-L-homocysteine + H(+)</text>
        <dbReference type="Rhea" id="RHEA:36899"/>
        <dbReference type="Rhea" id="RHEA-COMP:10145"/>
        <dbReference type="Rhea" id="RHEA-COMP:10147"/>
        <dbReference type="ChEBI" id="CHEBI:15378"/>
        <dbReference type="ChEBI" id="CHEBI:57856"/>
        <dbReference type="ChEBI" id="CHEBI:59789"/>
        <dbReference type="ChEBI" id="CHEBI:73542"/>
        <dbReference type="ChEBI" id="CHEBI:74269"/>
        <dbReference type="EC" id="2.1.1.228"/>
    </reaction>
</comment>
<comment type="subunit">
    <text evidence="1">Monomer.</text>
</comment>
<comment type="subcellular location">
    <subcellularLocation>
        <location evidence="1">Mitochondrion matrix</location>
    </subcellularLocation>
    <subcellularLocation>
        <location evidence="1">Nucleus</location>
    </subcellularLocation>
    <subcellularLocation>
        <location evidence="1">Cytoplasm</location>
    </subcellularLocation>
    <text evidence="1">Predominantly in the mitochondria and in the nucleus.</text>
</comment>
<comment type="similarity">
    <text evidence="3">Belongs to the class I-like SAM-binding methyltransferase superfamily. TRM5/TYW2 family.</text>
</comment>
<feature type="transit peptide" description="Mitochondrion" evidence="1">
    <location>
        <begin position="1"/>
        <end position="53"/>
    </location>
</feature>
<feature type="chain" id="PRO_0000414173" description="tRNA (guanine(37)-N(1))-methyltransferase">
    <location>
        <begin position="54"/>
        <end position="508"/>
    </location>
</feature>
<feature type="region of interest" description="Disordered" evidence="2">
    <location>
        <begin position="267"/>
        <end position="291"/>
    </location>
</feature>
<feature type="compositionally biased region" description="Basic and acidic residues" evidence="2">
    <location>
        <begin position="267"/>
        <end position="284"/>
    </location>
</feature>
<feature type="binding site" evidence="1">
    <location>
        <position position="253"/>
    </location>
    <ligand>
        <name>S-adenosyl-L-methionine</name>
        <dbReference type="ChEBI" id="CHEBI:59789"/>
    </ligand>
</feature>
<feature type="binding site" evidence="1">
    <location>
        <begin position="323"/>
        <end position="324"/>
    </location>
    <ligand>
        <name>S-adenosyl-L-methionine</name>
        <dbReference type="ChEBI" id="CHEBI:59789"/>
    </ligand>
</feature>
<feature type="binding site" evidence="1">
    <location>
        <begin position="351"/>
        <end position="352"/>
    </location>
    <ligand>
        <name>S-adenosyl-L-methionine</name>
        <dbReference type="ChEBI" id="CHEBI:59789"/>
    </ligand>
</feature>
<feature type="binding site" evidence="1">
    <location>
        <position position="402"/>
    </location>
    <ligand>
        <name>S-adenosyl-L-methionine</name>
        <dbReference type="ChEBI" id="CHEBI:59789"/>
    </ligand>
</feature>